<feature type="chain" id="PRO_0000228369" description="4-hydroxy-tetrahydrodipicolinate reductase">
    <location>
        <begin position="1"/>
        <end position="267"/>
    </location>
</feature>
<feature type="active site" description="Proton donor/acceptor" evidence="1">
    <location>
        <position position="155"/>
    </location>
</feature>
<feature type="active site" description="Proton donor" evidence="1">
    <location>
        <position position="159"/>
    </location>
</feature>
<feature type="binding site" evidence="1">
    <location>
        <begin position="8"/>
        <end position="13"/>
    </location>
    <ligand>
        <name>NAD(+)</name>
        <dbReference type="ChEBI" id="CHEBI:57540"/>
    </ligand>
</feature>
<feature type="binding site" evidence="1">
    <location>
        <position position="34"/>
    </location>
    <ligand>
        <name>NAD(+)</name>
        <dbReference type="ChEBI" id="CHEBI:57540"/>
    </ligand>
</feature>
<feature type="binding site" evidence="1">
    <location>
        <begin position="98"/>
        <end position="100"/>
    </location>
    <ligand>
        <name>NAD(+)</name>
        <dbReference type="ChEBI" id="CHEBI:57540"/>
    </ligand>
</feature>
<feature type="binding site" evidence="1">
    <location>
        <begin position="122"/>
        <end position="125"/>
    </location>
    <ligand>
        <name>NAD(+)</name>
        <dbReference type="ChEBI" id="CHEBI:57540"/>
    </ligand>
</feature>
<feature type="binding site" evidence="1">
    <location>
        <position position="156"/>
    </location>
    <ligand>
        <name>(S)-2,3,4,5-tetrahydrodipicolinate</name>
        <dbReference type="ChEBI" id="CHEBI:16845"/>
    </ligand>
</feature>
<feature type="binding site" evidence="1">
    <location>
        <begin position="165"/>
        <end position="166"/>
    </location>
    <ligand>
        <name>(S)-2,3,4,5-tetrahydrodipicolinate</name>
        <dbReference type="ChEBI" id="CHEBI:16845"/>
    </ligand>
</feature>
<keyword id="KW-0028">Amino-acid biosynthesis</keyword>
<keyword id="KW-0963">Cytoplasm</keyword>
<keyword id="KW-0220">Diaminopimelate biosynthesis</keyword>
<keyword id="KW-0457">Lysine biosynthesis</keyword>
<keyword id="KW-0520">NAD</keyword>
<keyword id="KW-0521">NADP</keyword>
<keyword id="KW-0560">Oxidoreductase</keyword>
<keyword id="KW-1185">Reference proteome</keyword>
<proteinExistence type="inferred from homology"/>
<gene>
    <name evidence="1" type="primary">dapB</name>
    <name type="ordered locus">Pcar_2422</name>
</gene>
<comment type="function">
    <text evidence="1">Catalyzes the conversion of 4-hydroxy-tetrahydrodipicolinate (HTPA) to tetrahydrodipicolinate.</text>
</comment>
<comment type="catalytic activity">
    <reaction evidence="1">
        <text>(S)-2,3,4,5-tetrahydrodipicolinate + NAD(+) + H2O = (2S,4S)-4-hydroxy-2,3,4,5-tetrahydrodipicolinate + NADH + H(+)</text>
        <dbReference type="Rhea" id="RHEA:35323"/>
        <dbReference type="ChEBI" id="CHEBI:15377"/>
        <dbReference type="ChEBI" id="CHEBI:15378"/>
        <dbReference type="ChEBI" id="CHEBI:16845"/>
        <dbReference type="ChEBI" id="CHEBI:57540"/>
        <dbReference type="ChEBI" id="CHEBI:57945"/>
        <dbReference type="ChEBI" id="CHEBI:67139"/>
        <dbReference type="EC" id="1.17.1.8"/>
    </reaction>
</comment>
<comment type="catalytic activity">
    <reaction evidence="1">
        <text>(S)-2,3,4,5-tetrahydrodipicolinate + NADP(+) + H2O = (2S,4S)-4-hydroxy-2,3,4,5-tetrahydrodipicolinate + NADPH + H(+)</text>
        <dbReference type="Rhea" id="RHEA:35331"/>
        <dbReference type="ChEBI" id="CHEBI:15377"/>
        <dbReference type="ChEBI" id="CHEBI:15378"/>
        <dbReference type="ChEBI" id="CHEBI:16845"/>
        <dbReference type="ChEBI" id="CHEBI:57783"/>
        <dbReference type="ChEBI" id="CHEBI:58349"/>
        <dbReference type="ChEBI" id="CHEBI:67139"/>
        <dbReference type="EC" id="1.17.1.8"/>
    </reaction>
</comment>
<comment type="pathway">
    <text evidence="1">Amino-acid biosynthesis; L-lysine biosynthesis via DAP pathway; (S)-tetrahydrodipicolinate from L-aspartate: step 4/4.</text>
</comment>
<comment type="subcellular location">
    <subcellularLocation>
        <location evidence="1">Cytoplasm</location>
    </subcellularLocation>
</comment>
<comment type="similarity">
    <text evidence="1">Belongs to the DapB family.</text>
</comment>
<comment type="caution">
    <text evidence="2">Was originally thought to be a dihydrodipicolinate reductase (DHDPR), catalyzing the conversion of dihydrodipicolinate to tetrahydrodipicolinate. However, it was shown in E.coli that the substrate of the enzymatic reaction is not dihydrodipicolinate (DHDP) but in fact (2S,4S)-4-hydroxy-2,3,4,5-tetrahydrodipicolinic acid (HTPA), the product released by the DapA-catalyzed reaction.</text>
</comment>
<evidence type="ECO:0000255" key="1">
    <source>
        <dbReference type="HAMAP-Rule" id="MF_00102"/>
    </source>
</evidence>
<evidence type="ECO:0000305" key="2"/>
<protein>
    <recommendedName>
        <fullName evidence="1">4-hydroxy-tetrahydrodipicolinate reductase</fullName>
        <shortName evidence="1">HTPA reductase</shortName>
        <ecNumber evidence="1">1.17.1.8</ecNumber>
    </recommendedName>
</protein>
<name>DAPB_SYNC1</name>
<reference key="1">
    <citation type="submission" date="2005-10" db="EMBL/GenBank/DDBJ databases">
        <title>Complete sequence of Pelobacter carbinolicus DSM 2380.</title>
        <authorList>
            <person name="Copeland A."/>
            <person name="Lucas S."/>
            <person name="Lapidus A."/>
            <person name="Barry K."/>
            <person name="Detter J.C."/>
            <person name="Glavina T."/>
            <person name="Hammon N."/>
            <person name="Israni S."/>
            <person name="Pitluck S."/>
            <person name="Chertkov O."/>
            <person name="Schmutz J."/>
            <person name="Larimer F."/>
            <person name="Land M."/>
            <person name="Kyrpides N."/>
            <person name="Ivanova N."/>
            <person name="Richardson P."/>
        </authorList>
    </citation>
    <scope>NUCLEOTIDE SEQUENCE [LARGE SCALE GENOMIC DNA]</scope>
    <source>
        <strain>DSM 2380 / NBRC 103641 / GraBd1</strain>
    </source>
</reference>
<organism>
    <name type="scientific">Syntrophotalea carbinolica (strain DSM 2380 / NBRC 103641 / GraBd1)</name>
    <name type="common">Pelobacter carbinolicus</name>
    <dbReference type="NCBI Taxonomy" id="338963"/>
    <lineage>
        <taxon>Bacteria</taxon>
        <taxon>Pseudomonadati</taxon>
        <taxon>Thermodesulfobacteriota</taxon>
        <taxon>Desulfuromonadia</taxon>
        <taxon>Desulfuromonadales</taxon>
        <taxon>Syntrophotaleaceae</taxon>
        <taxon>Syntrophotalea</taxon>
    </lineage>
</organism>
<dbReference type="EC" id="1.17.1.8" evidence="1"/>
<dbReference type="EMBL" id="CP000142">
    <property type="protein sequence ID" value="ABA89661.1"/>
    <property type="molecule type" value="Genomic_DNA"/>
</dbReference>
<dbReference type="RefSeq" id="WP_011342187.1">
    <property type="nucleotide sequence ID" value="NC_007498.2"/>
</dbReference>
<dbReference type="SMR" id="Q3A1U6"/>
<dbReference type="STRING" id="338963.Pcar_2422"/>
<dbReference type="KEGG" id="pca:Pcar_2422"/>
<dbReference type="eggNOG" id="COG0289">
    <property type="taxonomic scope" value="Bacteria"/>
</dbReference>
<dbReference type="HOGENOM" id="CLU_047479_2_1_7"/>
<dbReference type="OrthoDB" id="9790352at2"/>
<dbReference type="UniPathway" id="UPA00034">
    <property type="reaction ID" value="UER00018"/>
</dbReference>
<dbReference type="Proteomes" id="UP000002534">
    <property type="component" value="Chromosome"/>
</dbReference>
<dbReference type="GO" id="GO:0005829">
    <property type="term" value="C:cytosol"/>
    <property type="evidence" value="ECO:0007669"/>
    <property type="project" value="TreeGrafter"/>
</dbReference>
<dbReference type="GO" id="GO:0008839">
    <property type="term" value="F:4-hydroxy-tetrahydrodipicolinate reductase"/>
    <property type="evidence" value="ECO:0007669"/>
    <property type="project" value="UniProtKB-EC"/>
</dbReference>
<dbReference type="GO" id="GO:0051287">
    <property type="term" value="F:NAD binding"/>
    <property type="evidence" value="ECO:0007669"/>
    <property type="project" value="UniProtKB-UniRule"/>
</dbReference>
<dbReference type="GO" id="GO:0050661">
    <property type="term" value="F:NADP binding"/>
    <property type="evidence" value="ECO:0007669"/>
    <property type="project" value="UniProtKB-UniRule"/>
</dbReference>
<dbReference type="GO" id="GO:0016726">
    <property type="term" value="F:oxidoreductase activity, acting on CH or CH2 groups, NAD or NADP as acceptor"/>
    <property type="evidence" value="ECO:0007669"/>
    <property type="project" value="UniProtKB-UniRule"/>
</dbReference>
<dbReference type="GO" id="GO:0019877">
    <property type="term" value="P:diaminopimelate biosynthetic process"/>
    <property type="evidence" value="ECO:0007669"/>
    <property type="project" value="UniProtKB-UniRule"/>
</dbReference>
<dbReference type="GO" id="GO:0009089">
    <property type="term" value="P:lysine biosynthetic process via diaminopimelate"/>
    <property type="evidence" value="ECO:0007669"/>
    <property type="project" value="UniProtKB-UniRule"/>
</dbReference>
<dbReference type="CDD" id="cd02274">
    <property type="entry name" value="DHDPR_N"/>
    <property type="match status" value="1"/>
</dbReference>
<dbReference type="FunFam" id="3.30.360.10:FF:000004">
    <property type="entry name" value="4-hydroxy-tetrahydrodipicolinate reductase"/>
    <property type="match status" value="1"/>
</dbReference>
<dbReference type="FunFam" id="3.40.50.720:FF:000048">
    <property type="entry name" value="4-hydroxy-tetrahydrodipicolinate reductase"/>
    <property type="match status" value="1"/>
</dbReference>
<dbReference type="Gene3D" id="3.30.360.10">
    <property type="entry name" value="Dihydrodipicolinate Reductase, domain 2"/>
    <property type="match status" value="1"/>
</dbReference>
<dbReference type="Gene3D" id="3.40.50.720">
    <property type="entry name" value="NAD(P)-binding Rossmann-like Domain"/>
    <property type="match status" value="1"/>
</dbReference>
<dbReference type="HAMAP" id="MF_00102">
    <property type="entry name" value="DapB"/>
    <property type="match status" value="1"/>
</dbReference>
<dbReference type="InterPro" id="IPR022663">
    <property type="entry name" value="DapB_C"/>
</dbReference>
<dbReference type="InterPro" id="IPR000846">
    <property type="entry name" value="DapB_N"/>
</dbReference>
<dbReference type="InterPro" id="IPR022664">
    <property type="entry name" value="DapB_N_CS"/>
</dbReference>
<dbReference type="InterPro" id="IPR023940">
    <property type="entry name" value="DHDPR_bac"/>
</dbReference>
<dbReference type="InterPro" id="IPR036291">
    <property type="entry name" value="NAD(P)-bd_dom_sf"/>
</dbReference>
<dbReference type="NCBIfam" id="TIGR00036">
    <property type="entry name" value="dapB"/>
    <property type="match status" value="1"/>
</dbReference>
<dbReference type="PANTHER" id="PTHR20836:SF0">
    <property type="entry name" value="4-HYDROXY-TETRAHYDRODIPICOLINATE REDUCTASE 1, CHLOROPLASTIC-RELATED"/>
    <property type="match status" value="1"/>
</dbReference>
<dbReference type="PANTHER" id="PTHR20836">
    <property type="entry name" value="DIHYDRODIPICOLINATE REDUCTASE"/>
    <property type="match status" value="1"/>
</dbReference>
<dbReference type="Pfam" id="PF05173">
    <property type="entry name" value="DapB_C"/>
    <property type="match status" value="1"/>
</dbReference>
<dbReference type="Pfam" id="PF01113">
    <property type="entry name" value="DapB_N"/>
    <property type="match status" value="1"/>
</dbReference>
<dbReference type="PIRSF" id="PIRSF000161">
    <property type="entry name" value="DHPR"/>
    <property type="match status" value="1"/>
</dbReference>
<dbReference type="SUPFAM" id="SSF55347">
    <property type="entry name" value="Glyceraldehyde-3-phosphate dehydrogenase-like, C-terminal domain"/>
    <property type="match status" value="1"/>
</dbReference>
<dbReference type="SUPFAM" id="SSF51735">
    <property type="entry name" value="NAD(P)-binding Rossmann-fold domains"/>
    <property type="match status" value="1"/>
</dbReference>
<dbReference type="PROSITE" id="PS01298">
    <property type="entry name" value="DAPB"/>
    <property type="match status" value="1"/>
</dbReference>
<accession>Q3A1U6</accession>
<sequence length="267" mass="28619">MIKVAVNGAAGRMGGRLITAIKETEGLQLTGALEHAESPMLGQDAGLTAGCGPLDVLISSDLDEVLKATDVLIDFTFPEVSLRNLEACVRHDKSIVIGSTGFTPEQRARVDEMAQNIPVVLAPNMSVGVNACFKLLKEAAQILGDGFDVEIVELHHNKKKDSPSGTAVRMGEIVADALGRDYNKSAVYHREGMCGARTPEEIGMQTVRGGDIVGEHTVYFIGMGERIEITHRAMSRDMFARGAVRAASWLAGKAPGLYDMQDILGLK</sequence>